<evidence type="ECO:0000255" key="1">
    <source>
        <dbReference type="PROSITE-ProRule" id="PRU00251"/>
    </source>
</evidence>
<evidence type="ECO:0000256" key="2">
    <source>
        <dbReference type="SAM" id="MobiDB-lite"/>
    </source>
</evidence>
<evidence type="ECO:0000269" key="3">
    <source>
    </source>
</evidence>
<evidence type="ECO:0000269" key="4">
    <source>
    </source>
</evidence>
<evidence type="ECO:0000269" key="5">
    <source>
    </source>
</evidence>
<evidence type="ECO:0000305" key="6"/>
<dbReference type="EMBL" id="AJ224893">
    <property type="protein sequence ID" value="CAA12197.1"/>
    <property type="molecule type" value="Genomic_DNA"/>
</dbReference>
<dbReference type="EMBL" id="AAFI02000041">
    <property type="protein sequence ID" value="EAL66675.1"/>
    <property type="molecule type" value="Genomic_DNA"/>
</dbReference>
<dbReference type="RefSeq" id="XP_640674.1">
    <property type="nucleotide sequence ID" value="XM_635582.1"/>
</dbReference>
<dbReference type="SMR" id="Q54TY7"/>
<dbReference type="FunCoup" id="Q54TY7">
    <property type="interactions" value="489"/>
</dbReference>
<dbReference type="STRING" id="44689.Q54TY7"/>
<dbReference type="PaxDb" id="44689-DDB0214892"/>
<dbReference type="EnsemblProtists" id="EAL66675">
    <property type="protein sequence ID" value="EAL66675"/>
    <property type="gene ID" value="DDB_G0281387"/>
</dbReference>
<dbReference type="GeneID" id="8623058"/>
<dbReference type="KEGG" id="ddi:DDB_G0281387"/>
<dbReference type="dictyBase" id="DDB_G0281387">
    <property type="gene designation" value="srfA"/>
</dbReference>
<dbReference type="VEuPathDB" id="AmoebaDB:DDB_G0281387"/>
<dbReference type="eggNOG" id="KOG0015">
    <property type="taxonomic scope" value="Eukaryota"/>
</dbReference>
<dbReference type="HOGENOM" id="CLU_657923_0_0_1"/>
<dbReference type="InParanoid" id="Q54TY7"/>
<dbReference type="OMA" id="NINGLDM"/>
<dbReference type="PRO" id="PR:Q54TY7"/>
<dbReference type="Proteomes" id="UP000002195">
    <property type="component" value="Chromosome 3"/>
</dbReference>
<dbReference type="GO" id="GO:0005634">
    <property type="term" value="C:nucleus"/>
    <property type="evidence" value="ECO:0000305"/>
    <property type="project" value="dictyBase"/>
</dbReference>
<dbReference type="GO" id="GO:0003700">
    <property type="term" value="F:DNA-binding transcription factor activity"/>
    <property type="evidence" value="ECO:0000315"/>
    <property type="project" value="dictyBase"/>
</dbReference>
<dbReference type="GO" id="GO:0000981">
    <property type="term" value="F:DNA-binding transcription factor activity, RNA polymerase II-specific"/>
    <property type="evidence" value="ECO:0000318"/>
    <property type="project" value="GO_Central"/>
</dbReference>
<dbReference type="GO" id="GO:0046983">
    <property type="term" value="F:protein dimerization activity"/>
    <property type="evidence" value="ECO:0007669"/>
    <property type="project" value="InterPro"/>
</dbReference>
<dbReference type="GO" id="GO:0000978">
    <property type="term" value="F:RNA polymerase II cis-regulatory region sequence-specific DNA binding"/>
    <property type="evidence" value="ECO:0000318"/>
    <property type="project" value="GO_Central"/>
</dbReference>
<dbReference type="GO" id="GO:0031247">
    <property type="term" value="P:actin rod assembly"/>
    <property type="evidence" value="ECO:0000315"/>
    <property type="project" value="dictyBase"/>
</dbReference>
<dbReference type="GO" id="GO:0031154">
    <property type="term" value="P:culmination involved in sorocarp development"/>
    <property type="evidence" value="ECO:0000315"/>
    <property type="project" value="dictyBase"/>
</dbReference>
<dbReference type="GO" id="GO:0042331">
    <property type="term" value="P:phototaxis"/>
    <property type="evidence" value="ECO:0000315"/>
    <property type="project" value="dictyBase"/>
</dbReference>
<dbReference type="GO" id="GO:0043945">
    <property type="term" value="P:positive regulation of asexual sporulation resulting in formation of a cellular spore"/>
    <property type="evidence" value="ECO:0000315"/>
    <property type="project" value="dictyBase"/>
</dbReference>
<dbReference type="GO" id="GO:0045944">
    <property type="term" value="P:positive regulation of transcription by RNA polymerase II"/>
    <property type="evidence" value="ECO:0000318"/>
    <property type="project" value="GO_Central"/>
</dbReference>
<dbReference type="GO" id="GO:0006357">
    <property type="term" value="P:regulation of transcription by RNA polymerase II"/>
    <property type="evidence" value="ECO:0000315"/>
    <property type="project" value="dictyBase"/>
</dbReference>
<dbReference type="GO" id="GO:0042244">
    <property type="term" value="P:spore wall assembly"/>
    <property type="evidence" value="ECO:0000315"/>
    <property type="project" value="dictyBase"/>
</dbReference>
<dbReference type="GO" id="GO:0030435">
    <property type="term" value="P:sporulation resulting in formation of a cellular spore"/>
    <property type="evidence" value="ECO:0000315"/>
    <property type="project" value="dictyBase"/>
</dbReference>
<dbReference type="CDD" id="cd00266">
    <property type="entry name" value="MADS_SRF_like"/>
    <property type="match status" value="1"/>
</dbReference>
<dbReference type="FunFam" id="3.40.1810.10:FF:000002">
    <property type="entry name" value="Serum response factor b"/>
    <property type="match status" value="1"/>
</dbReference>
<dbReference type="Gene3D" id="3.40.1810.10">
    <property type="entry name" value="Transcription factor, MADS-box"/>
    <property type="match status" value="1"/>
</dbReference>
<dbReference type="InterPro" id="IPR050142">
    <property type="entry name" value="MADS-box/MEF2_TF"/>
</dbReference>
<dbReference type="InterPro" id="IPR033897">
    <property type="entry name" value="SRF-like_MADS-box"/>
</dbReference>
<dbReference type="InterPro" id="IPR002100">
    <property type="entry name" value="TF_MADSbox"/>
</dbReference>
<dbReference type="InterPro" id="IPR036879">
    <property type="entry name" value="TF_MADSbox_sf"/>
</dbReference>
<dbReference type="PANTHER" id="PTHR48019">
    <property type="entry name" value="SERUM RESPONSE FACTOR HOMOLOG"/>
    <property type="match status" value="1"/>
</dbReference>
<dbReference type="Pfam" id="PF00319">
    <property type="entry name" value="SRF-TF"/>
    <property type="match status" value="1"/>
</dbReference>
<dbReference type="PRINTS" id="PR00404">
    <property type="entry name" value="MADSDOMAIN"/>
</dbReference>
<dbReference type="SMART" id="SM00432">
    <property type="entry name" value="MADS"/>
    <property type="match status" value="1"/>
</dbReference>
<dbReference type="SUPFAM" id="SSF55455">
    <property type="entry name" value="SRF-like"/>
    <property type="match status" value="1"/>
</dbReference>
<dbReference type="PROSITE" id="PS00350">
    <property type="entry name" value="MADS_BOX_1"/>
    <property type="match status" value="1"/>
</dbReference>
<dbReference type="PROSITE" id="PS50066">
    <property type="entry name" value="MADS_BOX_2"/>
    <property type="match status" value="1"/>
</dbReference>
<feature type="chain" id="PRO_0000327938" description="Serum response factor homolog A">
    <location>
        <begin position="1"/>
        <end position="418"/>
    </location>
</feature>
<feature type="domain" description="MADS-box" evidence="1">
    <location>
        <begin position="67"/>
        <end position="127"/>
    </location>
</feature>
<feature type="region of interest" description="Disordered" evidence="2">
    <location>
        <begin position="14"/>
        <end position="67"/>
    </location>
</feature>
<feature type="region of interest" description="Disordered" evidence="2">
    <location>
        <begin position="144"/>
        <end position="170"/>
    </location>
</feature>
<feature type="region of interest" description="Disordered" evidence="2">
    <location>
        <begin position="301"/>
        <end position="351"/>
    </location>
</feature>
<feature type="region of interest" description="Disordered" evidence="2">
    <location>
        <begin position="388"/>
        <end position="418"/>
    </location>
</feature>
<feature type="compositionally biased region" description="Low complexity" evidence="2">
    <location>
        <begin position="22"/>
        <end position="39"/>
    </location>
</feature>
<feature type="compositionally biased region" description="Low complexity" evidence="2">
    <location>
        <begin position="51"/>
        <end position="61"/>
    </location>
</feature>
<feature type="compositionally biased region" description="Low complexity" evidence="2">
    <location>
        <begin position="150"/>
        <end position="170"/>
    </location>
</feature>
<feature type="compositionally biased region" description="Low complexity" evidence="2">
    <location>
        <begin position="306"/>
        <end position="351"/>
    </location>
</feature>
<feature type="compositionally biased region" description="Low complexity" evidence="2">
    <location>
        <begin position="388"/>
        <end position="399"/>
    </location>
</feature>
<feature type="compositionally biased region" description="Polar residues" evidence="2">
    <location>
        <begin position="400"/>
        <end position="418"/>
    </location>
</feature>
<feature type="sequence conflict" description="In Ref. 1; CAA12197." evidence="6" ref="1">
    <original>Q</original>
    <variation>QQ</variation>
    <location>
        <position position="253"/>
    </location>
</feature>
<feature type="sequence conflict" description="In Ref. 1; CAA12197." evidence="6" ref="1">
    <original>N</original>
    <variation>NN</variation>
    <location>
        <position position="343"/>
    </location>
</feature>
<organism>
    <name type="scientific">Dictyostelium discoideum</name>
    <name type="common">Social amoeba</name>
    <dbReference type="NCBI Taxonomy" id="44689"/>
    <lineage>
        <taxon>Eukaryota</taxon>
        <taxon>Amoebozoa</taxon>
        <taxon>Evosea</taxon>
        <taxon>Eumycetozoa</taxon>
        <taxon>Dictyostelia</taxon>
        <taxon>Dictyosteliales</taxon>
        <taxon>Dictyosteliaceae</taxon>
        <taxon>Dictyostelium</taxon>
    </lineage>
</organism>
<accession>Q54TY7</accession>
<accession>O76853</accession>
<gene>
    <name type="primary">srfA</name>
    <name type="ORF">DDB_G0281387</name>
</gene>
<sequence length="418" mass="47546">MSLSTVSNHIINPLGNVVYGNPSSPTSTSSSSSLTPTSTNEEMIKKEDSGTSEPSSPSTGECNGKKAGRRKIKIEFIDDKSRRHITFSKRKAGIMKKAYELSTLTGTQVLLLVASETGHVYTFATAKLQPLITRPEGKNLIQSCLNTPDNPNSPSMANQNSNNNSNLLQQQQQQQLQQQQQLQQQQQQQQQQQQQQQQQQQQQQAAQQAVQQQQQQQAAQQQAAQQQQLQLQQQQQQQQQQQQQQQQQQQQQQLQQLQQQQLLQQQQHQQIQQHQQQQQYINSNGYPETIYDIQDKDIERRLGKDNNNNNNNNNNNINNNNNNNNSNNNSGNNNSNNNNNNNNKNNSNNNSQYIQQQNLNIDLNYSNPNVYPIGNYFQQTVQSRYIQSSSSASSSPASPNQFNYSNHSMPLNNQFPPC</sequence>
<keyword id="KW-0238">DNA-binding</keyword>
<keyword id="KW-0539">Nucleus</keyword>
<keyword id="KW-1185">Reference proteome</keyword>
<keyword id="KW-0804">Transcription</keyword>
<keyword id="KW-0805">Transcription regulation</keyword>
<proteinExistence type="evidence at protein level"/>
<name>SRFA_DICDI</name>
<comment type="function">
    <text evidence="4">Required for proper slug migration, spore differentiation and stalk differentiation (under nonbuffered conditions). Could be involved in late events of spore maturation necessary for spore stability.</text>
</comment>
<comment type="subcellular location">
    <subcellularLocation>
        <location evidence="1">Nucleus</location>
    </subcellularLocation>
</comment>
<comment type="developmental stage">
    <text evidence="3 5">Expressed in prestalk, prespore and spore cells. Expression of mRNA starts at 8 hours of development when loose aggregates form and remains constant until the onset of culmination at 20 hours when a significant increase is observed.</text>
</comment>
<comment type="induction">
    <text>Induced by the protein kinase A (PKA) which is activated during culmination. This leads to the expression of srfA in prespore cells.</text>
</comment>
<comment type="disruption phenotype">
    <text evidence="4 5">Cells have an abnormal spore morphology and show a greatly reduced spore viability. No defects in the overall morphology of the structures were observed during development, except for a delay of 3-4 hours in culmination. Prestalk gene expression is normal. Expression of the prespore marker cotB is unaffected whereas expression of the spore gene spiA is greatly reduced. Mutant spore show no formation of mature actin rods. The spore outer layer gets wavier as the spore ages and suffers a progressive degradation.</text>
</comment>
<reference key="1">
    <citation type="journal article" date="1998" name="Development">
        <title>A serum response factor homolog is required for spore differentiation in Dictyostelium.</title>
        <authorList>
            <person name="Escalante R."/>
            <person name="Sastre L."/>
        </authorList>
    </citation>
    <scope>NUCLEOTIDE SEQUENCE [GENOMIC DNA]</scope>
    <scope>DEVELOPMENTAL STAGE</scope>
    <scope>DISRUPTION PHENOTYPE</scope>
    <source>
        <strain>AX4</strain>
    </source>
</reference>
<reference key="2">
    <citation type="journal article" date="2005" name="Nature">
        <title>The genome of the social amoeba Dictyostelium discoideum.</title>
        <authorList>
            <person name="Eichinger L."/>
            <person name="Pachebat J.A."/>
            <person name="Gloeckner G."/>
            <person name="Rajandream M.A."/>
            <person name="Sucgang R."/>
            <person name="Berriman M."/>
            <person name="Song J."/>
            <person name="Olsen R."/>
            <person name="Szafranski K."/>
            <person name="Xu Q."/>
            <person name="Tunggal B."/>
            <person name="Kummerfeld S."/>
            <person name="Madera M."/>
            <person name="Konfortov B.A."/>
            <person name="Rivero F."/>
            <person name="Bankier A.T."/>
            <person name="Lehmann R."/>
            <person name="Hamlin N."/>
            <person name="Davies R."/>
            <person name="Gaudet P."/>
            <person name="Fey P."/>
            <person name="Pilcher K."/>
            <person name="Chen G."/>
            <person name="Saunders D."/>
            <person name="Sodergren E.J."/>
            <person name="Davis P."/>
            <person name="Kerhornou A."/>
            <person name="Nie X."/>
            <person name="Hall N."/>
            <person name="Anjard C."/>
            <person name="Hemphill L."/>
            <person name="Bason N."/>
            <person name="Farbrother P."/>
            <person name="Desany B."/>
            <person name="Just E."/>
            <person name="Morio T."/>
            <person name="Rost R."/>
            <person name="Churcher C.M."/>
            <person name="Cooper J."/>
            <person name="Haydock S."/>
            <person name="van Driessche N."/>
            <person name="Cronin A."/>
            <person name="Goodhead I."/>
            <person name="Muzny D.M."/>
            <person name="Mourier T."/>
            <person name="Pain A."/>
            <person name="Lu M."/>
            <person name="Harper D."/>
            <person name="Lindsay R."/>
            <person name="Hauser H."/>
            <person name="James K.D."/>
            <person name="Quiles M."/>
            <person name="Madan Babu M."/>
            <person name="Saito T."/>
            <person name="Buchrieser C."/>
            <person name="Wardroper A."/>
            <person name="Felder M."/>
            <person name="Thangavelu M."/>
            <person name="Johnson D."/>
            <person name="Knights A."/>
            <person name="Loulseged H."/>
            <person name="Mungall K.L."/>
            <person name="Oliver K."/>
            <person name="Price C."/>
            <person name="Quail M.A."/>
            <person name="Urushihara H."/>
            <person name="Hernandez J."/>
            <person name="Rabbinowitsch E."/>
            <person name="Steffen D."/>
            <person name="Sanders M."/>
            <person name="Ma J."/>
            <person name="Kohara Y."/>
            <person name="Sharp S."/>
            <person name="Simmonds M.N."/>
            <person name="Spiegler S."/>
            <person name="Tivey A."/>
            <person name="Sugano S."/>
            <person name="White B."/>
            <person name="Walker D."/>
            <person name="Woodward J.R."/>
            <person name="Winckler T."/>
            <person name="Tanaka Y."/>
            <person name="Shaulsky G."/>
            <person name="Schleicher M."/>
            <person name="Weinstock G.M."/>
            <person name="Rosenthal A."/>
            <person name="Cox E.C."/>
            <person name="Chisholm R.L."/>
            <person name="Gibbs R.A."/>
            <person name="Loomis W.F."/>
            <person name="Platzer M."/>
            <person name="Kay R.R."/>
            <person name="Williams J.G."/>
            <person name="Dear P.H."/>
            <person name="Noegel A.A."/>
            <person name="Barrell B.G."/>
            <person name="Kuspa A."/>
        </authorList>
    </citation>
    <scope>NUCLEOTIDE SEQUENCE [LARGE SCALE GENOMIC DNA]</scope>
    <source>
        <strain>AX4</strain>
    </source>
</reference>
<reference key="3">
    <citation type="journal article" date="2001" name="Dev. Biol.">
        <title>The MADS-box gene srfA is expressed in a complex pattern under the control of alternative promoters and is essential for different aspects of Dictyostelium development.</title>
        <authorList>
            <person name="Escalante R."/>
            <person name="Vicente J.J."/>
            <person name="Moreno N."/>
            <person name="Sastre L."/>
        </authorList>
    </citation>
    <scope>EXPRESSION</scope>
    <scope>DEVELOPMENTAL STAGE</scope>
</reference>
<reference key="4">
    <citation type="journal article" date="2002" name="Mech. Dev.">
        <title>Regulated expression of the MADS-box transcription factor SrfA mediates activation of gene expression by protein kinase A during Dictyostelium sporulation.</title>
        <authorList>
            <person name="Escalante R."/>
            <person name="Sastre L."/>
        </authorList>
    </citation>
    <scope>REGULATION BY PROTEIN KINASE A</scope>
    <source>
        <strain>AX4</strain>
    </source>
</reference>
<reference key="5">
    <citation type="journal article" date="2004" name="Mech. Dev.">
        <title>The MADS-box transcription factor SrfA is required for actin cytoskeleton organization and spore coat stability during Dictyostelium sporulation.</title>
        <authorList>
            <person name="Escalante R."/>
            <person name="Yamada Y."/>
            <person name="Cotter D."/>
            <person name="Sastre L."/>
            <person name="Sameshima M."/>
        </authorList>
    </citation>
    <scope>FUNCTION IN SPORE STABILITY</scope>
    <scope>DISRUPTION PHENOTYPE</scope>
    <source>
        <strain>AX4</strain>
    </source>
</reference>
<protein>
    <recommendedName>
        <fullName>Serum response factor homolog A</fullName>
    </recommendedName>
    <alternativeName>
        <fullName>DsSRF</fullName>
    </alternativeName>
</protein>